<dbReference type="EMBL" id="AE014075">
    <property type="protein sequence ID" value="AAN80761.1"/>
    <property type="molecule type" value="Genomic_DNA"/>
</dbReference>
<dbReference type="RefSeq" id="WP_000147302.1">
    <property type="nucleotide sequence ID" value="NZ_CP051263.1"/>
</dbReference>
<dbReference type="BMRB" id="P0A965"/>
<dbReference type="SMR" id="P0A965"/>
<dbReference type="STRING" id="199310.c2302"/>
<dbReference type="GeneID" id="93776192"/>
<dbReference type="KEGG" id="ecc:c2302"/>
<dbReference type="eggNOG" id="COG0835">
    <property type="taxonomic scope" value="Bacteria"/>
</dbReference>
<dbReference type="HOGENOM" id="CLU_048995_1_0_6"/>
<dbReference type="BioCyc" id="ECOL199310:C2302-MONOMER"/>
<dbReference type="Proteomes" id="UP000001410">
    <property type="component" value="Chromosome"/>
</dbReference>
<dbReference type="GO" id="GO:0005829">
    <property type="term" value="C:cytosol"/>
    <property type="evidence" value="ECO:0007669"/>
    <property type="project" value="TreeGrafter"/>
</dbReference>
<dbReference type="GO" id="GO:0006935">
    <property type="term" value="P:chemotaxis"/>
    <property type="evidence" value="ECO:0007669"/>
    <property type="project" value="UniProtKB-KW"/>
</dbReference>
<dbReference type="GO" id="GO:0007165">
    <property type="term" value="P:signal transduction"/>
    <property type="evidence" value="ECO:0007669"/>
    <property type="project" value="InterPro"/>
</dbReference>
<dbReference type="CDD" id="cd00732">
    <property type="entry name" value="CheW"/>
    <property type="match status" value="1"/>
</dbReference>
<dbReference type="FunFam" id="2.40.50.180:FF:000002">
    <property type="entry name" value="Chemotaxis protein CheW"/>
    <property type="match status" value="1"/>
</dbReference>
<dbReference type="Gene3D" id="2.40.50.180">
    <property type="entry name" value="CheA-289, Domain 4"/>
    <property type="match status" value="1"/>
</dbReference>
<dbReference type="Gene3D" id="2.30.30.40">
    <property type="entry name" value="SH3 Domains"/>
    <property type="match status" value="1"/>
</dbReference>
<dbReference type="InterPro" id="IPR039315">
    <property type="entry name" value="CheW"/>
</dbReference>
<dbReference type="InterPro" id="IPR036061">
    <property type="entry name" value="CheW-like_dom_sf"/>
</dbReference>
<dbReference type="InterPro" id="IPR002545">
    <property type="entry name" value="CheW-lke_dom"/>
</dbReference>
<dbReference type="NCBIfam" id="NF007903">
    <property type="entry name" value="PRK10612.1"/>
    <property type="match status" value="1"/>
</dbReference>
<dbReference type="PANTHER" id="PTHR22617:SF45">
    <property type="entry name" value="CHEMOTAXIS PROTEIN CHEW"/>
    <property type="match status" value="1"/>
</dbReference>
<dbReference type="PANTHER" id="PTHR22617">
    <property type="entry name" value="CHEMOTAXIS SENSOR HISTIDINE KINASE-RELATED"/>
    <property type="match status" value="1"/>
</dbReference>
<dbReference type="Pfam" id="PF01584">
    <property type="entry name" value="CheW"/>
    <property type="match status" value="1"/>
</dbReference>
<dbReference type="SMART" id="SM00260">
    <property type="entry name" value="CheW"/>
    <property type="match status" value="1"/>
</dbReference>
<dbReference type="SUPFAM" id="SSF50341">
    <property type="entry name" value="CheW-like"/>
    <property type="match status" value="1"/>
</dbReference>
<dbReference type="PROSITE" id="PS50851">
    <property type="entry name" value="CHEW"/>
    <property type="match status" value="1"/>
</dbReference>
<reference key="1">
    <citation type="journal article" date="2002" name="Proc. Natl. Acad. Sci. U.S.A.">
        <title>Extensive mosaic structure revealed by the complete genome sequence of uropathogenic Escherichia coli.</title>
        <authorList>
            <person name="Welch R.A."/>
            <person name="Burland V."/>
            <person name="Plunkett G. III"/>
            <person name="Redford P."/>
            <person name="Roesch P."/>
            <person name="Rasko D."/>
            <person name="Buckles E.L."/>
            <person name="Liou S.-R."/>
            <person name="Boutin A."/>
            <person name="Hackett J."/>
            <person name="Stroud D."/>
            <person name="Mayhew G.F."/>
            <person name="Rose D.J."/>
            <person name="Zhou S."/>
            <person name="Schwartz D.C."/>
            <person name="Perna N.T."/>
            <person name="Mobley H.L.T."/>
            <person name="Donnenberg M.S."/>
            <person name="Blattner F.R."/>
        </authorList>
    </citation>
    <scope>NUCLEOTIDE SEQUENCE [LARGE SCALE GENOMIC DNA]</scope>
    <source>
        <strain>CFT073 / ATCC 700928 / UPEC</strain>
    </source>
</reference>
<keyword id="KW-0145">Chemotaxis</keyword>
<keyword id="KW-0963">Cytoplasm</keyword>
<keyword id="KW-1185">Reference proteome</keyword>
<sequence>MTGMTNVTKLASEPSGQEFLVFTLGDEEYGIDILKVQEIRGYDQVTRIANTPAFIKGVTNLRGVIVPIVDLRIKFSQVDVDYNDNTVVIVLNLGQRVVGIVVDGVSDVLSLTAEQIRPAPEFAVTLSTEYLTGLGALGDRMLILVNIEKLLNSEEMALLDSAASEVA</sequence>
<comment type="function">
    <text evidence="1">Involved in the transmission of sensory signals from the chemoreceptors to the flagellar motors. It physically bridges CheA to the MCPs (methyl-accepting chemotaxis proteins) to allow regulated phosphotransfer to CheY and CheB (By similarity).</text>
</comment>
<comment type="subunit">
    <text evidence="1">An in vitro complex of CheW/CheA(L)/CheA(S) in a 1:1:1 ratio increases the autophosphorylation of CheA and is required for the binding of CheY, the phosphorylation substrate. This complex accounts for 10% of the total number of molecules (By similarity).</text>
</comment>
<comment type="subcellular location">
    <subcellularLocation>
        <location evidence="1">Cytoplasm</location>
    </subcellularLocation>
</comment>
<organism>
    <name type="scientific">Escherichia coli O6:H1 (strain CFT073 / ATCC 700928 / UPEC)</name>
    <dbReference type="NCBI Taxonomy" id="199310"/>
    <lineage>
        <taxon>Bacteria</taxon>
        <taxon>Pseudomonadati</taxon>
        <taxon>Pseudomonadota</taxon>
        <taxon>Gammaproteobacteria</taxon>
        <taxon>Enterobacterales</taxon>
        <taxon>Enterobacteriaceae</taxon>
        <taxon>Escherichia</taxon>
    </lineage>
</organism>
<gene>
    <name type="primary">cheW</name>
    <name type="ordered locus">c2302</name>
</gene>
<proteinExistence type="inferred from homology"/>
<name>CHEW_ECOL6</name>
<accession>P0A965</accession>
<accession>P07365</accession>
<protein>
    <recommendedName>
        <fullName>Chemotaxis protein CheW</fullName>
    </recommendedName>
</protein>
<feature type="chain" id="PRO_0000198343" description="Chemotaxis protein CheW">
    <location>
        <begin position="1"/>
        <end position="167"/>
    </location>
</feature>
<feature type="domain" description="CheW-like" evidence="2">
    <location>
        <begin position="16"/>
        <end position="156"/>
    </location>
</feature>
<evidence type="ECO:0000250" key="1"/>
<evidence type="ECO:0000255" key="2">
    <source>
        <dbReference type="PROSITE-ProRule" id="PRU00052"/>
    </source>
</evidence>